<organism>
    <name type="scientific">Arthrobacter sp</name>
    <dbReference type="NCBI Taxonomy" id="1667"/>
    <lineage>
        <taxon>Bacteria</taxon>
        <taxon>Bacillati</taxon>
        <taxon>Actinomycetota</taxon>
        <taxon>Actinomycetes</taxon>
        <taxon>Micrococcales</taxon>
        <taxon>Micrococcaceae</taxon>
        <taxon>Arthrobacter</taxon>
    </lineage>
</organism>
<feature type="chain" id="PRO_0000400829" description="4-hydroxybenzoyl-CoA thioesterase">
    <location>
        <begin position="1"/>
        <end position="151"/>
    </location>
</feature>
<feature type="active site" evidence="2">
    <location>
        <position position="73"/>
    </location>
</feature>
<feature type="binding site">
    <location>
        <begin position="100"/>
        <end position="102"/>
    </location>
    <ligand>
        <name>substrate</name>
    </ligand>
</feature>
<feature type="mutagenesis site" description="Drastically reduces catalytic activity." evidence="2">
    <original>E</original>
    <variation>A</variation>
    <location>
        <position position="73"/>
    </location>
</feature>
<feature type="sequence conflict" description="In Ref. 4; BAB40578." evidence="5" ref="4">
    <original>V</original>
    <variation>I</variation>
    <location>
        <position position="37"/>
    </location>
</feature>
<feature type="sequence conflict" description="In Ref. 4; BAB40578." evidence="5" ref="4">
    <original>A</original>
    <variation>T</variation>
    <location>
        <position position="67"/>
    </location>
</feature>
<feature type="sequence conflict" description="In Ref. 4; BAB40578." evidence="5" ref="4">
    <original>V</original>
    <variation>I</variation>
    <location>
        <position position="114"/>
    </location>
</feature>
<feature type="sequence conflict" description="In Ref. 4; BAB40578." evidence="5" ref="4">
    <original>D</original>
    <variation>N</variation>
    <location>
        <position position="126"/>
    </location>
</feature>
<feature type="helix" evidence="12">
    <location>
        <begin position="12"/>
        <end position="14"/>
    </location>
</feature>
<feature type="helix" evidence="11">
    <location>
        <begin position="26"/>
        <end position="28"/>
    </location>
</feature>
<feature type="helix" evidence="11">
    <location>
        <begin position="30"/>
        <end position="34"/>
    </location>
</feature>
<feature type="strand" evidence="11">
    <location>
        <begin position="37"/>
        <end position="41"/>
    </location>
</feature>
<feature type="strand" evidence="11">
    <location>
        <begin position="43"/>
        <end position="51"/>
    </location>
</feature>
<feature type="helix" evidence="11">
    <location>
        <begin position="54"/>
        <end position="56"/>
    </location>
</feature>
<feature type="strand" evidence="11">
    <location>
        <begin position="61"/>
        <end position="63"/>
    </location>
</feature>
<feature type="helix" evidence="11">
    <location>
        <begin position="65"/>
        <end position="84"/>
    </location>
</feature>
<feature type="helix" evidence="11">
    <location>
        <begin position="85"/>
        <end position="87"/>
    </location>
</feature>
<feature type="strand" evidence="11">
    <location>
        <begin position="89"/>
        <end position="102"/>
    </location>
</feature>
<feature type="strand" evidence="11">
    <location>
        <begin position="106"/>
        <end position="118"/>
    </location>
</feature>
<feature type="strand" evidence="11">
    <location>
        <begin position="120"/>
        <end position="130"/>
    </location>
</feature>
<feature type="strand" evidence="11">
    <location>
        <begin position="136"/>
        <end position="148"/>
    </location>
</feature>
<keyword id="KW-0002">3D-structure</keyword>
<keyword id="KW-0378">Hydrolase</keyword>
<keyword id="KW-0614">Plasmid</keyword>
<name>4HBT_ARTSP</name>
<gene>
    <name evidence="9" type="primary">fcbC</name>
    <name evidence="6" type="synonym">fcbC1</name>
</gene>
<dbReference type="EC" id="3.1.2.23"/>
<dbReference type="EMBL" id="M93187">
    <property type="protein sequence ID" value="AAC80224.1"/>
    <property type="molecule type" value="Genomic_DNA"/>
</dbReference>
<dbReference type="EMBL" id="AF042490">
    <property type="protein sequence ID" value="AAF76242.1"/>
    <property type="molecule type" value="Genomic_DNA"/>
</dbReference>
<dbReference type="EMBL" id="AM231748">
    <property type="protein sequence ID" value="CAJ77823.1"/>
    <property type="molecule type" value="Genomic_DNA"/>
</dbReference>
<dbReference type="EMBL" id="AB041030">
    <property type="protein sequence ID" value="BAB40578.1"/>
    <property type="molecule type" value="Genomic_DNA"/>
</dbReference>
<dbReference type="PDB" id="1Q4S">
    <property type="method" value="X-ray"/>
    <property type="resolution" value="1.95 A"/>
    <property type="chains" value="A/B=1-151"/>
</dbReference>
<dbReference type="PDB" id="1Q4T">
    <property type="method" value="X-ray"/>
    <property type="resolution" value="1.60 A"/>
    <property type="chains" value="A/B=1-151"/>
</dbReference>
<dbReference type="PDB" id="1Q4U">
    <property type="method" value="X-ray"/>
    <property type="resolution" value="1.60 A"/>
    <property type="chains" value="A/B=1-151"/>
</dbReference>
<dbReference type="PDB" id="3R32">
    <property type="method" value="X-ray"/>
    <property type="resolution" value="1.80 A"/>
    <property type="chains" value="A/B=1-151"/>
</dbReference>
<dbReference type="PDB" id="3R34">
    <property type="method" value="X-ray"/>
    <property type="resolution" value="1.80 A"/>
    <property type="chains" value="A/B=1-151"/>
</dbReference>
<dbReference type="PDB" id="3R35">
    <property type="method" value="X-ray"/>
    <property type="resolution" value="1.80 A"/>
    <property type="chains" value="A/B=1-151"/>
</dbReference>
<dbReference type="PDB" id="3R36">
    <property type="method" value="X-ray"/>
    <property type="resolution" value="1.95 A"/>
    <property type="chains" value="A/B=1-151"/>
</dbReference>
<dbReference type="PDB" id="3R37">
    <property type="method" value="X-ray"/>
    <property type="resolution" value="1.80 A"/>
    <property type="chains" value="A/B=1-151"/>
</dbReference>
<dbReference type="PDB" id="3R3A">
    <property type="method" value="X-ray"/>
    <property type="resolution" value="1.80 A"/>
    <property type="chains" value="A/B=1-151"/>
</dbReference>
<dbReference type="PDB" id="3R3B">
    <property type="method" value="X-ray"/>
    <property type="resolution" value="1.80 A"/>
    <property type="chains" value="A/B=1-151"/>
</dbReference>
<dbReference type="PDB" id="3R3C">
    <property type="method" value="X-ray"/>
    <property type="resolution" value="1.80 A"/>
    <property type="chains" value="A/B=1-151"/>
</dbReference>
<dbReference type="PDB" id="3R3D">
    <property type="method" value="X-ray"/>
    <property type="resolution" value="1.75 A"/>
    <property type="chains" value="A/B=1-151"/>
</dbReference>
<dbReference type="PDB" id="3R3F">
    <property type="method" value="X-ray"/>
    <property type="resolution" value="1.75 A"/>
    <property type="chains" value="A/B=1-151"/>
</dbReference>
<dbReference type="PDB" id="3TEA">
    <property type="method" value="X-ray"/>
    <property type="resolution" value="1.80 A"/>
    <property type="chains" value="A/B=1-151"/>
</dbReference>
<dbReference type="PDBsum" id="1Q4S"/>
<dbReference type="PDBsum" id="1Q4T"/>
<dbReference type="PDBsum" id="1Q4U"/>
<dbReference type="PDBsum" id="3R32"/>
<dbReference type="PDBsum" id="3R34"/>
<dbReference type="PDBsum" id="3R35"/>
<dbReference type="PDBsum" id="3R36"/>
<dbReference type="PDBsum" id="3R37"/>
<dbReference type="PDBsum" id="3R3A"/>
<dbReference type="PDBsum" id="3R3B"/>
<dbReference type="PDBsum" id="3R3C"/>
<dbReference type="PDBsum" id="3R3D"/>
<dbReference type="PDBsum" id="3R3F"/>
<dbReference type="PDBsum" id="3TEA"/>
<dbReference type="SMR" id="Q04416"/>
<dbReference type="DrugBank" id="DB04242">
    <property type="generic name" value="4-hydroxybenzoic acid"/>
</dbReference>
<dbReference type="DrugBank" id="DB04067">
    <property type="generic name" value="4-hydroxybenzyl coenzyme A"/>
</dbReference>
<dbReference type="DrugBank" id="DB03613">
    <property type="generic name" value="4-hydroxyphenacyl coenzyme A"/>
</dbReference>
<dbReference type="DrugBank" id="DB01992">
    <property type="generic name" value="Coenzyme A"/>
</dbReference>
<dbReference type="BRENDA" id="3.1.2.23">
    <property type="organism ID" value="457"/>
</dbReference>
<dbReference type="SABIO-RK" id="Q04416"/>
<dbReference type="UniPathway" id="UPA01011">
    <property type="reaction ID" value="UER01022"/>
</dbReference>
<dbReference type="EvolutionaryTrace" id="Q04416"/>
<dbReference type="GO" id="GO:0005829">
    <property type="term" value="C:cytosol"/>
    <property type="evidence" value="ECO:0007669"/>
    <property type="project" value="TreeGrafter"/>
</dbReference>
<dbReference type="GO" id="GO:0061522">
    <property type="term" value="F:1,4-dihydroxy-2-naphthoyl-CoA thioesterase activity"/>
    <property type="evidence" value="ECO:0007669"/>
    <property type="project" value="TreeGrafter"/>
</dbReference>
<dbReference type="GO" id="GO:0018739">
    <property type="term" value="F:4-hydroxybenzoyl-CoA thioesterase activity"/>
    <property type="evidence" value="ECO:0000314"/>
    <property type="project" value="UniProtKB"/>
</dbReference>
<dbReference type="CDD" id="cd03443">
    <property type="entry name" value="PaaI_thioesterase"/>
    <property type="match status" value="1"/>
</dbReference>
<dbReference type="Gene3D" id="3.10.129.10">
    <property type="entry name" value="Hotdog Thioesterase"/>
    <property type="match status" value="1"/>
</dbReference>
<dbReference type="InterPro" id="IPR029069">
    <property type="entry name" value="HotDog_dom_sf"/>
</dbReference>
<dbReference type="InterPro" id="IPR003736">
    <property type="entry name" value="PAAI_dom"/>
</dbReference>
<dbReference type="InterPro" id="IPR006683">
    <property type="entry name" value="Thioestr_dom"/>
</dbReference>
<dbReference type="NCBIfam" id="TIGR00369">
    <property type="entry name" value="unchar_dom_1"/>
    <property type="match status" value="1"/>
</dbReference>
<dbReference type="PANTHER" id="PTHR43240">
    <property type="entry name" value="1,4-DIHYDROXY-2-NAPHTHOYL-COA THIOESTERASE 1"/>
    <property type="match status" value="1"/>
</dbReference>
<dbReference type="PANTHER" id="PTHR43240:SF5">
    <property type="entry name" value="1,4-DIHYDROXY-2-NAPHTHOYL-COA THIOESTERASE 1"/>
    <property type="match status" value="1"/>
</dbReference>
<dbReference type="Pfam" id="PF03061">
    <property type="entry name" value="4HBT"/>
    <property type="match status" value="1"/>
</dbReference>
<dbReference type="SUPFAM" id="SSF54637">
    <property type="entry name" value="Thioesterase/thiol ester dehydrase-isomerase"/>
    <property type="match status" value="1"/>
</dbReference>
<comment type="catalytic activity">
    <reaction evidence="1">
        <text>4-hydroxybenzoyl-CoA + H2O = 4-hydroxybenzoate + CoA + H(+)</text>
        <dbReference type="Rhea" id="RHEA:11948"/>
        <dbReference type="ChEBI" id="CHEBI:15377"/>
        <dbReference type="ChEBI" id="CHEBI:15378"/>
        <dbReference type="ChEBI" id="CHEBI:17879"/>
        <dbReference type="ChEBI" id="CHEBI:57287"/>
        <dbReference type="ChEBI" id="CHEBI:57356"/>
        <dbReference type="EC" id="3.1.2.23"/>
    </reaction>
</comment>
<comment type="biophysicochemical properties">
    <kinetics>
        <KM evidence="1">243 uM for benzoyl-CoA</KM>
        <KM evidence="1">1.24 uM for 4-hydroxybenzoyl-CoA</KM>
        <KM evidence="1">22 uM for 3-hydroxybenzoyl-CoA</KM>
        <KM evidence="1">29 uM for 2,5-dihydroxybenzoyl-CoA</KM>
        <KM evidence="1">113 uM for 4-chlorobenzoyl-CoA</KM>
        <KM evidence="1">140 uM for phenylacetyl-CoA</KM>
        <KM evidence="1">2200 uM for acetyl-CoA</KM>
        <KM evidence="1">1100 uM for propionyl-CoA</KM>
        <KM evidence="1">930 uM for butyryl-CoA</KM>
        <KM evidence="1">810 uM for crotonyl-CoA</KM>
    </kinetics>
    <phDependence>
        <text evidence="1">Optimum pH is 4.6-9.6.</text>
    </phDependence>
</comment>
<comment type="pathway">
    <text>Xenobiotic degradation; 4-chlorobenzoate degradation; 4-hydroxybenzoate from 4-chlorobenzoate: step 3/3.</text>
</comment>
<comment type="subunit">
    <text evidence="2">Homotetramer.</text>
</comment>
<comment type="mass spectrometry"/>
<comment type="similarity">
    <text evidence="5">Belongs to the thioesterase PaaI family.</text>
</comment>
<sequence>MHRTSNGSHATGGNLPDVASHYPVAYEQTLDGTVGFVIDEMTPERATASVEVTDTLRQRWGLVHGGAYCALAEMLATEATVAVVHEKGMMAVGQSNHTSFFRPVKEGHVRAEAVRIHAGSTTWFWDVSLRDDAGRLCAVSSMSIAVRPRRD</sequence>
<geneLocation type="plasmid" evidence="6">
    <name>pASU1</name>
</geneLocation>
<accession>Q04416</accession>
<accession>Q2A653</accession>
<accession>Q7BUB8</accession>
<accession>Q9AJQ4</accession>
<proteinExistence type="evidence at protein level"/>
<protein>
    <recommendedName>
        <fullName evidence="4">4-hydroxybenzoyl-CoA thioesterase</fullName>
        <shortName evidence="4">4-HBA-CoA thioesterase</shortName>
        <ecNumber>3.1.2.23</ecNumber>
    </recommendedName>
</protein>
<evidence type="ECO:0000269" key="1">
    <source>
    </source>
</evidence>
<evidence type="ECO:0000269" key="2">
    <source>
    </source>
</evidence>
<evidence type="ECO:0000269" key="3">
    <source>
    </source>
</evidence>
<evidence type="ECO:0000303" key="4">
    <source>
    </source>
</evidence>
<evidence type="ECO:0000305" key="5"/>
<evidence type="ECO:0000312" key="6">
    <source>
        <dbReference type="EMBL" id="AAC80224.1"/>
    </source>
</evidence>
<evidence type="ECO:0000312" key="7">
    <source>
        <dbReference type="EMBL" id="AAF76242.1"/>
    </source>
</evidence>
<evidence type="ECO:0000312" key="8">
    <source>
        <dbReference type="EMBL" id="BAB40578.1"/>
    </source>
</evidence>
<evidence type="ECO:0000312" key="9">
    <source>
        <dbReference type="EMBL" id="CAJ77823.1"/>
    </source>
</evidence>
<evidence type="ECO:0000312" key="10">
    <source>
        <dbReference type="PDB" id="1Q4T"/>
    </source>
</evidence>
<evidence type="ECO:0007829" key="11">
    <source>
        <dbReference type="PDB" id="1Q4T"/>
    </source>
</evidence>
<evidence type="ECO:0007829" key="12">
    <source>
        <dbReference type="PDB" id="3R32"/>
    </source>
</evidence>
<reference evidence="6" key="1">
    <citation type="journal article" date="1992" name="Appl. Environ. Microbiol.">
        <title>Cloning and sequence analysis of genes for dehalogenation of 4-chlorobenzoate from Arthrobacter sp. strain SU.</title>
        <authorList>
            <person name="Schmitz A."/>
            <person name="Gartemann K.H."/>
            <person name="Fiedler J."/>
            <person name="Grund E."/>
            <person name="Eichenlaub R."/>
        </authorList>
    </citation>
    <scope>NUCLEOTIDE SEQUENCE [GENOMIC DNA]</scope>
    <source>
        <strain evidence="6">DSM 20407 / SU</strain>
        <plasmid>pASU1</plasmid>
    </source>
</reference>
<reference evidence="5 7" key="2">
    <citation type="journal article" date="2001" name="J. Bacteriol.">
        <title>Isolation and characterization of IS1409, an insertion element of 4-chlorobenzoate-degrading Arthrobacter sp. strain TM1, and development of a system for transposon mutagenesis.</title>
        <authorList>
            <person name="Gartemann K.H."/>
            <person name="Eichenlaub R."/>
        </authorList>
    </citation>
    <scope>NUCLEOTIDE SEQUENCE [GENOMIC DNA]</scope>
    <source>
        <strain evidence="7">NCIB 12013 / TM1</strain>
    </source>
</reference>
<reference evidence="9" key="3">
    <citation type="journal article" date="2007" name="Appl. Microbiol. Biotechnol.">
        <title>Cloning of the Arthrobacter sp. FG1 dehalogenase genes and construction of hybrid pathways in Pseudomonas putida strains.</title>
        <authorList>
            <person name="Radice F."/>
            <person name="Orlandi V."/>
            <person name="Massa V."/>
            <person name="Battini V."/>
            <person name="Bertoni G."/>
            <person name="Reineke W."/>
            <person name="Barbieri P."/>
        </authorList>
    </citation>
    <scope>NUCLEOTIDE SEQUENCE [GENOMIC DNA]</scope>
    <source>
        <strain evidence="3">FG1</strain>
    </source>
</reference>
<reference evidence="8" key="4">
    <citation type="submission" date="2000-03" db="EMBL/GenBank/DDBJ databases">
        <title>4-chlorobenzoate dehalogenase genes are tandemly duplicated in Arthrobacter sp. FHP1.</title>
        <authorList>
            <person name="Miyashita K."/>
            <person name="Ogawa N."/>
            <person name="Tsumori Y."/>
        </authorList>
    </citation>
    <scope>NUCLEOTIDE SEQUENCE [GENOMIC DNA]</scope>
    <source>
        <strain evidence="8">FHP1</strain>
    </source>
</reference>
<reference evidence="5" key="5">
    <citation type="journal article" date="2003" name="Appl. Environ. Microbiol.">
        <title>Characterization of the 4-hydroxybenzoyl-coenzyme A thioesterase from Arthrobacter sp. strain SU.</title>
        <authorList>
            <person name="Zhuang Z."/>
            <person name="Gartemann K.H."/>
            <person name="Eichenlaub R."/>
            <person name="Dunaway-Mariano D."/>
        </authorList>
    </citation>
    <scope>CATALYTIC ACTIVITY</scope>
    <scope>BIOPHYSICOCHEMICAL PROPERTIES</scope>
    <scope>MASS SPECTROMETRY</scope>
    <source>
        <strain evidence="1">DSM 20407 / SU</strain>
    </source>
</reference>
<reference evidence="10" key="6">
    <citation type="journal article" date="2003" name="J. Biol. Chem.">
        <title>The structure of 4-hydroxybenzoyl-CoA thioesterase from arthrobacter sp. strain SU.</title>
        <authorList>
            <person name="Thoden J.B."/>
            <person name="Zhuang Z."/>
            <person name="Dunaway-Mariano D."/>
            <person name="Holden H.M."/>
        </authorList>
    </citation>
    <scope>X-RAY CRYSTALLOGRAPHY (1.6 ANGSTROMS) IN COMPLEX WITH SUBSTRATE ANALOG AND IN COMPLEX WITH PRODUCT</scope>
    <scope>SUBUNIT</scope>
    <scope>ACTIVE SITE</scope>
    <scope>MUTAGENESIS OF GLU-73</scope>
    <source>
        <strain evidence="2">DSM 20407 / SU</strain>
    </source>
</reference>